<proteinExistence type="evidence at protein level"/>
<dbReference type="EMBL" id="AF529416">
    <property type="protein sequence ID" value="AAQ09525.1"/>
    <property type="molecule type" value="mRNA"/>
</dbReference>
<dbReference type="EMBL" id="AY122468">
    <property type="protein sequence ID" value="AAM93910.1"/>
    <property type="molecule type" value="mRNA"/>
</dbReference>
<dbReference type="EMBL" id="AF540980">
    <property type="protein sequence ID" value="AAN33116.1"/>
    <property type="molecule type" value="mRNA"/>
</dbReference>
<dbReference type="CCDS" id="CCDS31631.1"/>
<dbReference type="RefSeq" id="NP_001002035.1">
    <property type="nucleotide sequence ID" value="NM_001002035.2"/>
</dbReference>
<dbReference type="SMR" id="Q8NET1"/>
<dbReference type="BioGRID" id="128836">
    <property type="interactions" value="3"/>
</dbReference>
<dbReference type="FunCoup" id="Q8NET1">
    <property type="interactions" value="1"/>
</dbReference>
<dbReference type="IntAct" id="Q8NET1">
    <property type="interactions" value="3"/>
</dbReference>
<dbReference type="STRING" id="9606.ENSP00000333234"/>
<dbReference type="BioMuta" id="DEFB108B"/>
<dbReference type="DMDM" id="37154739"/>
<dbReference type="PaxDb" id="9606-ENSP00000333234"/>
<dbReference type="Antibodypedia" id="49119">
    <property type="antibodies" value="12 antibodies from 7 providers"/>
</dbReference>
<dbReference type="DNASU" id="245911"/>
<dbReference type="Ensembl" id="ENST00000328698.2">
    <property type="protein sequence ID" value="ENSP00000333234.1"/>
    <property type="gene ID" value="ENSG00000184276.3"/>
</dbReference>
<dbReference type="GeneID" id="245911"/>
<dbReference type="KEGG" id="hsa:245911"/>
<dbReference type="MANE-Select" id="ENST00000328698.2">
    <property type="protein sequence ID" value="ENSP00000333234.1"/>
    <property type="RefSeq nucleotide sequence ID" value="NM_001002035.2"/>
    <property type="RefSeq protein sequence ID" value="NP_001002035.1"/>
</dbReference>
<dbReference type="UCSC" id="uc010rqr.2">
    <property type="organism name" value="human"/>
</dbReference>
<dbReference type="AGR" id="HGNC:29966"/>
<dbReference type="CTD" id="245911"/>
<dbReference type="DisGeNET" id="245911"/>
<dbReference type="GeneCards" id="DEFB108B"/>
<dbReference type="HGNC" id="HGNC:29966">
    <property type="gene designation" value="DEFB108B"/>
</dbReference>
<dbReference type="HPA" id="ENSG00000184276">
    <property type="expression patterns" value="Tissue enriched (epididymis)"/>
</dbReference>
<dbReference type="neXtProt" id="NX_Q8NET1"/>
<dbReference type="OpenTargets" id="ENSG00000184276"/>
<dbReference type="PharmGKB" id="PA142671994"/>
<dbReference type="VEuPathDB" id="HostDB:ENSG00000184276"/>
<dbReference type="eggNOG" id="ENOG502T9UC">
    <property type="taxonomic scope" value="Eukaryota"/>
</dbReference>
<dbReference type="GeneTree" id="ENSGT00390000009472"/>
<dbReference type="HOGENOM" id="CLU_196184_0_0_1"/>
<dbReference type="InParanoid" id="Q8NET1"/>
<dbReference type="OMA" id="CIETEIH"/>
<dbReference type="OrthoDB" id="9832145at2759"/>
<dbReference type="PAN-GO" id="Q8NET1">
    <property type="GO annotations" value="0 GO annotations based on evolutionary models"/>
</dbReference>
<dbReference type="PhylomeDB" id="Q8NET1"/>
<dbReference type="PathwayCommons" id="Q8NET1"/>
<dbReference type="Reactome" id="R-HSA-1461957">
    <property type="pathway name" value="Beta defensins"/>
</dbReference>
<dbReference type="Reactome" id="R-HSA-1461973">
    <property type="pathway name" value="Defensins"/>
</dbReference>
<dbReference type="SignaLink" id="Q8NET1"/>
<dbReference type="BioGRID-ORCS" id="245911">
    <property type="hits" value="18 hits in 1058 CRISPR screens"/>
</dbReference>
<dbReference type="GenomeRNAi" id="245911"/>
<dbReference type="Pharos" id="Q8NET1">
    <property type="development level" value="Tdark"/>
</dbReference>
<dbReference type="PRO" id="PR:Q8NET1"/>
<dbReference type="Proteomes" id="UP000005640">
    <property type="component" value="Chromosome 11"/>
</dbReference>
<dbReference type="RNAct" id="Q8NET1">
    <property type="molecule type" value="protein"/>
</dbReference>
<dbReference type="Bgee" id="ENSG00000184276">
    <property type="expression patterns" value="Expressed in primordial germ cell in gonad and 66 other cell types or tissues"/>
</dbReference>
<dbReference type="GO" id="GO:0005576">
    <property type="term" value="C:extracellular region"/>
    <property type="evidence" value="ECO:0007669"/>
    <property type="project" value="UniProtKB-SubCell"/>
</dbReference>
<dbReference type="GO" id="GO:0042742">
    <property type="term" value="P:defense response to bacterium"/>
    <property type="evidence" value="ECO:0007669"/>
    <property type="project" value="UniProtKB-KW"/>
</dbReference>
<dbReference type="GO" id="GO:0045087">
    <property type="term" value="P:innate immune response"/>
    <property type="evidence" value="ECO:0007669"/>
    <property type="project" value="InterPro"/>
</dbReference>
<dbReference type="InterPro" id="IPR025933">
    <property type="entry name" value="Beta_defensin_dom"/>
</dbReference>
<dbReference type="PANTHER" id="PTHR20515">
    <property type="entry name" value="BETA-DEFENSIN"/>
    <property type="match status" value="1"/>
</dbReference>
<dbReference type="PANTHER" id="PTHR20515:SF3">
    <property type="entry name" value="BETA-DEFENSIN 109B-RELATED"/>
    <property type="match status" value="1"/>
</dbReference>
<dbReference type="Pfam" id="PF13841">
    <property type="entry name" value="Defensin_beta_2"/>
    <property type="match status" value="1"/>
</dbReference>
<sequence>MRIAVLLFAIFFFMSQVLPARGKFKEICERPNGSCRDFCLETEIHVGRCLNSQPCCLPLGHQPRIESTTPKKD</sequence>
<gene>
    <name type="primary">DEFB108B</name>
    <name type="synonym">DEFB108</name>
    <name type="synonym">DEFB8</name>
</gene>
<protein>
    <recommendedName>
        <fullName>Beta-defensin 108B</fullName>
    </recommendedName>
    <alternativeName>
        <fullName>Beta-defensin 8</fullName>
        <shortName>BD-8</shortName>
        <shortName>DEFB-8</shortName>
        <shortName>hBD-8</shortName>
    </alternativeName>
    <alternativeName>
        <fullName>Defensin, beta 108</fullName>
    </alternativeName>
    <alternativeName>
        <fullName>Defensin, beta 108B</fullName>
    </alternativeName>
</protein>
<evidence type="ECO:0000250" key="1"/>
<evidence type="ECO:0000255" key="2"/>
<evidence type="ECO:0000269" key="3">
    <source>
    </source>
</evidence>
<evidence type="ECO:0000269" key="4">
    <source>
    </source>
</evidence>
<evidence type="ECO:0000305" key="5"/>
<reference key="1">
    <citation type="journal article" date="2003" name="Am. J. Respir. Cell Mol. Biol.">
        <title>ORFeome-based search of airway epithelial cell-specific novel human beta-defensin genes.</title>
        <authorList>
            <person name="Kao C.Y."/>
            <person name="Chen Y."/>
            <person name="Zhao Y.H."/>
            <person name="Wu R."/>
        </authorList>
    </citation>
    <scope>NUCLEOTIDE SEQUENCE [MRNA]</scope>
    <scope>TISSUE SPECIFICITY</scope>
</reference>
<reference key="2">
    <citation type="journal article" date="2002" name="Proc. Natl. Acad. Sci. U.S.A.">
        <title>Discovery of five conserved beta-defensin gene clusters using a computational search strategy.</title>
        <authorList>
            <person name="Schutte B.C."/>
            <person name="Mitros J.P."/>
            <person name="Bartlett J.A."/>
            <person name="Walters J.D."/>
            <person name="Jia H.P."/>
            <person name="Welsh M.J."/>
            <person name="Casavant T.L."/>
            <person name="McCray P.B. Jr."/>
        </authorList>
    </citation>
    <scope>NUCLEOTIDE SEQUENCE [MRNA] OF 22-73</scope>
    <scope>IDENTIFICATION</scope>
    <source>
        <tissue>Testis</tissue>
    </source>
</reference>
<reference key="3">
    <citation type="journal article" date="2003" name="Genome Biol.">
        <title>Duplication and selection in the evolution of primate beta-defensin genes.</title>
        <authorList>
            <person name="Semple C.A.M."/>
            <person name="Rolfe M."/>
            <person name="Dorin J.R."/>
        </authorList>
    </citation>
    <scope>NUCLEOTIDE SEQUENCE [MRNA] OF 1-59</scope>
    <scope>VARIANT ARG-53</scope>
</reference>
<feature type="signal peptide" evidence="2">
    <location>
        <begin position="1"/>
        <end position="22"/>
    </location>
</feature>
<feature type="peptide" id="PRO_0000006981" description="Beta-defensin 108B">
    <location>
        <begin position="23"/>
        <end position="73"/>
    </location>
</feature>
<feature type="disulfide bond" evidence="1">
    <location>
        <begin position="28"/>
        <end position="55"/>
    </location>
</feature>
<feature type="disulfide bond" evidence="1">
    <location>
        <begin position="35"/>
        <end position="49"/>
    </location>
</feature>
<feature type="disulfide bond" evidence="1">
    <location>
        <begin position="39"/>
        <end position="56"/>
    </location>
</feature>
<feature type="sequence variant" id="VAR_059246" description="In dbSNP:rs12285436.">
    <original>I</original>
    <variation>V</variation>
    <location>
        <position position="27"/>
    </location>
</feature>
<feature type="sequence variant" id="VAR_048862" description="In dbSNP:rs12793731.">
    <original>R</original>
    <variation>W</variation>
    <location>
        <position position="36"/>
    </location>
</feature>
<feature type="sequence variant" id="VAR_059247" description="In dbSNP:rs12285495.">
    <original>H</original>
    <variation>L</variation>
    <location>
        <position position="45"/>
    </location>
</feature>
<feature type="sequence variant" id="VAR_059248" description="In dbSNP:rs7120658." evidence="4">
    <original>Q</original>
    <variation>R</variation>
    <location>
        <position position="53"/>
    </location>
</feature>
<feature type="sequence conflict" description="In Ref. 3; AAN33116." evidence="5" ref="3">
    <original>LFA</original>
    <variation>FFT</variation>
    <location>
        <begin position="7"/>
        <end position="9"/>
    </location>
</feature>
<feature type="sequence conflict" description="In Ref. 3; AAN33116." evidence="5" ref="3">
    <original>R</original>
    <variation>K</variation>
    <location>
        <position position="21"/>
    </location>
</feature>
<organism>
    <name type="scientific">Homo sapiens</name>
    <name type="common">Human</name>
    <dbReference type="NCBI Taxonomy" id="9606"/>
    <lineage>
        <taxon>Eukaryota</taxon>
        <taxon>Metazoa</taxon>
        <taxon>Chordata</taxon>
        <taxon>Craniata</taxon>
        <taxon>Vertebrata</taxon>
        <taxon>Euteleostomi</taxon>
        <taxon>Mammalia</taxon>
        <taxon>Eutheria</taxon>
        <taxon>Euarchontoglires</taxon>
        <taxon>Primates</taxon>
        <taxon>Haplorrhini</taxon>
        <taxon>Catarrhini</taxon>
        <taxon>Hominidae</taxon>
        <taxon>Homo</taxon>
    </lineage>
</organism>
<comment type="function">
    <text evidence="1">Has antibacterial activity.</text>
</comment>
<comment type="interaction">
    <interactant intactId="EBI-13346443">
        <id>Q8NET1</id>
    </interactant>
    <interactant intactId="EBI-13059134">
        <id>Q13520</id>
        <label>AQP6</label>
    </interactant>
    <organismsDiffer>false</organismsDiffer>
    <experiments>3</experiments>
</comment>
<comment type="interaction">
    <interactant intactId="EBI-13346443">
        <id>Q8NET1</id>
    </interactant>
    <interactant intactId="EBI-13345167">
        <id>Q8TDT2</id>
        <label>GPR152</label>
    </interactant>
    <organismsDiffer>false</organismsDiffer>
    <experiments>3</experiments>
</comment>
<comment type="interaction">
    <interactant intactId="EBI-13346443">
        <id>Q8NET1</id>
    </interactant>
    <interactant intactId="EBI-12808018">
        <id>Q9UKG4</id>
        <label>SLC13A4</label>
    </interactant>
    <organismsDiffer>false</organismsDiffer>
    <experiments>3</experiments>
</comment>
<comment type="subcellular location">
    <subcellularLocation>
        <location>Secreted</location>
    </subcellularLocation>
</comment>
<comment type="tissue specificity">
    <text evidence="3">Specifically expressed in testis. Low expression is detected also in liver.</text>
</comment>
<comment type="similarity">
    <text evidence="5">Belongs to the beta-defensin family.</text>
</comment>
<keyword id="KW-0044">Antibiotic</keyword>
<keyword id="KW-0929">Antimicrobial</keyword>
<keyword id="KW-0211">Defensin</keyword>
<keyword id="KW-1015">Disulfide bond</keyword>
<keyword id="KW-1185">Reference proteome</keyword>
<keyword id="KW-0964">Secreted</keyword>
<keyword id="KW-0732">Signal</keyword>
<name>D108B_HUMAN</name>
<accession>Q8NET1</accession>